<comment type="function">
    <text evidence="1">Specifically methylates the N4 position of cytidine in position 1402 (C1402) of 16S rRNA.</text>
</comment>
<comment type="catalytic activity">
    <reaction evidence="1">
        <text>cytidine(1402) in 16S rRNA + S-adenosyl-L-methionine = N(4)-methylcytidine(1402) in 16S rRNA + S-adenosyl-L-homocysteine + H(+)</text>
        <dbReference type="Rhea" id="RHEA:42928"/>
        <dbReference type="Rhea" id="RHEA-COMP:10286"/>
        <dbReference type="Rhea" id="RHEA-COMP:10287"/>
        <dbReference type="ChEBI" id="CHEBI:15378"/>
        <dbReference type="ChEBI" id="CHEBI:57856"/>
        <dbReference type="ChEBI" id="CHEBI:59789"/>
        <dbReference type="ChEBI" id="CHEBI:74506"/>
        <dbReference type="ChEBI" id="CHEBI:82748"/>
        <dbReference type="EC" id="2.1.1.199"/>
    </reaction>
</comment>
<comment type="subcellular location">
    <subcellularLocation>
        <location evidence="1">Cytoplasm</location>
    </subcellularLocation>
</comment>
<comment type="similarity">
    <text evidence="1">Belongs to the methyltransferase superfamily. RsmH family.</text>
</comment>
<reference key="1">
    <citation type="journal article" date="2011" name="J. Bacteriol.">
        <title>Complete genome and proteome of Acholeplasma laidlawii.</title>
        <authorList>
            <person name="Lazarev V.N."/>
            <person name="Levitskii S.A."/>
            <person name="Basovskii Y.I."/>
            <person name="Chukin M.M."/>
            <person name="Akopian T.A."/>
            <person name="Vereshchagin V.V."/>
            <person name="Kostrjukova E.S."/>
            <person name="Kovaleva G.Y."/>
            <person name="Kazanov M.D."/>
            <person name="Malko D.B."/>
            <person name="Vitreschak A.G."/>
            <person name="Sernova N.V."/>
            <person name="Gelfand M.S."/>
            <person name="Demina I.A."/>
            <person name="Serebryakova M.V."/>
            <person name="Galyamina M.A."/>
            <person name="Vtyurin N.N."/>
            <person name="Rogov S.I."/>
            <person name="Alexeev D.G."/>
            <person name="Ladygina V.G."/>
            <person name="Govorun V.M."/>
        </authorList>
    </citation>
    <scope>NUCLEOTIDE SEQUENCE [LARGE SCALE GENOMIC DNA]</scope>
    <source>
        <strain>PG-8A</strain>
    </source>
</reference>
<name>RSMH1_ACHLI</name>
<keyword id="KW-0963">Cytoplasm</keyword>
<keyword id="KW-0489">Methyltransferase</keyword>
<keyword id="KW-1185">Reference proteome</keyword>
<keyword id="KW-0698">rRNA processing</keyword>
<keyword id="KW-0949">S-adenosyl-L-methionine</keyword>
<keyword id="KW-0808">Transferase</keyword>
<feature type="chain" id="PRO_0000386678" description="Ribosomal RNA small subunit methyltransferase H 1">
    <location>
        <begin position="1"/>
        <end position="299"/>
    </location>
</feature>
<feature type="binding site" evidence="1">
    <location>
        <begin position="31"/>
        <end position="33"/>
    </location>
    <ligand>
        <name>S-adenosyl-L-methionine</name>
        <dbReference type="ChEBI" id="CHEBI:59789"/>
    </ligand>
</feature>
<feature type="binding site" evidence="1">
    <location>
        <position position="50"/>
    </location>
    <ligand>
        <name>S-adenosyl-L-methionine</name>
        <dbReference type="ChEBI" id="CHEBI:59789"/>
    </ligand>
</feature>
<feature type="binding site" evidence="1">
    <location>
        <position position="76"/>
    </location>
    <ligand>
        <name>S-adenosyl-L-methionine</name>
        <dbReference type="ChEBI" id="CHEBI:59789"/>
    </ligand>
</feature>
<feature type="binding site" evidence="1">
    <location>
        <position position="97"/>
    </location>
    <ligand>
        <name>S-adenosyl-L-methionine</name>
        <dbReference type="ChEBI" id="CHEBI:59789"/>
    </ligand>
</feature>
<feature type="binding site" evidence="1">
    <location>
        <position position="104"/>
    </location>
    <ligand>
        <name>S-adenosyl-L-methionine</name>
        <dbReference type="ChEBI" id="CHEBI:59789"/>
    </ligand>
</feature>
<organism>
    <name type="scientific">Acholeplasma laidlawii (strain PG-8A)</name>
    <dbReference type="NCBI Taxonomy" id="441768"/>
    <lineage>
        <taxon>Bacteria</taxon>
        <taxon>Bacillati</taxon>
        <taxon>Mycoplasmatota</taxon>
        <taxon>Mollicutes</taxon>
        <taxon>Acholeplasmatales</taxon>
        <taxon>Acholeplasmataceae</taxon>
        <taxon>Acholeplasma</taxon>
    </lineage>
</organism>
<sequence>MKHISVLLNESIEGLNIKPNGIYVDATLGGGGHSLEILKKLDKGHLYAFDQDAYAIGRATERLKDFSNKTFIQSNFSFIKEKLNELGIYQVDGIIFDLGLSSFQIDDETRGFSYLKDYDLDMRMNKDATLTAKEIVNTYERQKLADIFRAYGDEENAWKIAGMIVDRRPLNTTLELVEITDIANKGMKGHSAKRVFQALRIEVNKELEVLERALNSALELLNIGGRLSIITFQSLEDKMVKSFYKTHSQMDYPKNIDIRTFPKPPLKIITRKPVLPSEIELEHNSRSRSAKLRIAEKQS</sequence>
<proteinExistence type="inferred from homology"/>
<accession>A9NFP3</accession>
<dbReference type="EC" id="2.1.1.199" evidence="1"/>
<dbReference type="EMBL" id="CP000896">
    <property type="protein sequence ID" value="ABX81173.1"/>
    <property type="molecule type" value="Genomic_DNA"/>
</dbReference>
<dbReference type="RefSeq" id="WP_012242504.1">
    <property type="nucleotide sequence ID" value="NC_010163.1"/>
</dbReference>
<dbReference type="SMR" id="A9NFP3"/>
<dbReference type="STRING" id="441768.ACL_0555"/>
<dbReference type="GeneID" id="41338733"/>
<dbReference type="KEGG" id="acl:ACL_0555"/>
<dbReference type="eggNOG" id="COG0275">
    <property type="taxonomic scope" value="Bacteria"/>
</dbReference>
<dbReference type="HOGENOM" id="CLU_038422_2_0_14"/>
<dbReference type="OrthoDB" id="9806637at2"/>
<dbReference type="Proteomes" id="UP000008558">
    <property type="component" value="Chromosome"/>
</dbReference>
<dbReference type="GO" id="GO:0005737">
    <property type="term" value="C:cytoplasm"/>
    <property type="evidence" value="ECO:0007669"/>
    <property type="project" value="UniProtKB-SubCell"/>
</dbReference>
<dbReference type="GO" id="GO:0071424">
    <property type="term" value="F:rRNA (cytosine-N4-)-methyltransferase activity"/>
    <property type="evidence" value="ECO:0007669"/>
    <property type="project" value="UniProtKB-UniRule"/>
</dbReference>
<dbReference type="GO" id="GO:0070475">
    <property type="term" value="P:rRNA base methylation"/>
    <property type="evidence" value="ECO:0007669"/>
    <property type="project" value="UniProtKB-UniRule"/>
</dbReference>
<dbReference type="Gene3D" id="1.10.150.170">
    <property type="entry name" value="Putative methyltransferase TM0872, insert domain"/>
    <property type="match status" value="1"/>
</dbReference>
<dbReference type="Gene3D" id="3.40.50.150">
    <property type="entry name" value="Vaccinia Virus protein VP39"/>
    <property type="match status" value="1"/>
</dbReference>
<dbReference type="HAMAP" id="MF_01007">
    <property type="entry name" value="16SrRNA_methyltr_H"/>
    <property type="match status" value="1"/>
</dbReference>
<dbReference type="InterPro" id="IPR002903">
    <property type="entry name" value="RsmH"/>
</dbReference>
<dbReference type="InterPro" id="IPR023397">
    <property type="entry name" value="SAM-dep_MeTrfase_MraW_recog"/>
</dbReference>
<dbReference type="InterPro" id="IPR029063">
    <property type="entry name" value="SAM-dependent_MTases_sf"/>
</dbReference>
<dbReference type="NCBIfam" id="TIGR00006">
    <property type="entry name" value="16S rRNA (cytosine(1402)-N(4))-methyltransferase RsmH"/>
    <property type="match status" value="1"/>
</dbReference>
<dbReference type="PANTHER" id="PTHR11265:SF0">
    <property type="entry name" value="12S RRNA N4-METHYLCYTIDINE METHYLTRANSFERASE"/>
    <property type="match status" value="1"/>
</dbReference>
<dbReference type="PANTHER" id="PTHR11265">
    <property type="entry name" value="S-ADENOSYL-METHYLTRANSFERASE MRAW"/>
    <property type="match status" value="1"/>
</dbReference>
<dbReference type="Pfam" id="PF01795">
    <property type="entry name" value="Methyltransf_5"/>
    <property type="match status" value="1"/>
</dbReference>
<dbReference type="PIRSF" id="PIRSF004486">
    <property type="entry name" value="MraW"/>
    <property type="match status" value="1"/>
</dbReference>
<dbReference type="SUPFAM" id="SSF81799">
    <property type="entry name" value="Putative methyltransferase TM0872, insert domain"/>
    <property type="match status" value="1"/>
</dbReference>
<dbReference type="SUPFAM" id="SSF53335">
    <property type="entry name" value="S-adenosyl-L-methionine-dependent methyltransferases"/>
    <property type="match status" value="1"/>
</dbReference>
<gene>
    <name evidence="1" type="primary">rsmH1</name>
    <name type="synonym">mraW1</name>
    <name type="ordered locus">ACL_0555</name>
</gene>
<evidence type="ECO:0000255" key="1">
    <source>
        <dbReference type="HAMAP-Rule" id="MF_01007"/>
    </source>
</evidence>
<protein>
    <recommendedName>
        <fullName evidence="1">Ribosomal RNA small subunit methyltransferase H 1</fullName>
        <ecNumber evidence="1">2.1.1.199</ecNumber>
    </recommendedName>
    <alternativeName>
        <fullName evidence="1">16S rRNA m(4)C1402 methyltransferase 1</fullName>
    </alternativeName>
    <alternativeName>
        <fullName evidence="1">rRNA (cytosine-N(4)-)-methyltransferase RsmH 1</fullName>
    </alternativeName>
</protein>